<proteinExistence type="inferred from homology"/>
<sequence>MTKTLTKHLQAIKDSKRGIFVPYIMAGDHAKGLDGLFETITLLENSGVSAIEVGIPWSDPVADGPIIELAGQRSLAKDVTLTAIIKKLQEKKTQVPLVIMTYINPVYQYGIEAFVKDLAETSVKGLIIPDLPNEHADFITPYLRDSDIALVPLVSLTTGIDRQKQLIDGAEGFIYAVAINGVTGKTGNYRDDLDKHLSNLTAYADIPVLTGFGVSTEEDIKRFNAVSDGVIVGSKIVRDLHDGKEEEVAEFVTFGSHFEK</sequence>
<keyword id="KW-0028">Amino-acid biosynthesis</keyword>
<keyword id="KW-0057">Aromatic amino acid biosynthesis</keyword>
<keyword id="KW-0456">Lyase</keyword>
<keyword id="KW-1185">Reference proteome</keyword>
<keyword id="KW-0822">Tryptophan biosynthesis</keyword>
<reference key="1">
    <citation type="journal article" date="2004" name="Nat. Biotechnol.">
        <title>Complete sequence and comparative genome analysis of the dairy bacterium Streptococcus thermophilus.</title>
        <authorList>
            <person name="Bolotin A."/>
            <person name="Quinquis B."/>
            <person name="Renault P."/>
            <person name="Sorokin A."/>
            <person name="Ehrlich S.D."/>
            <person name="Kulakauskas S."/>
            <person name="Lapidus A."/>
            <person name="Goltsman E."/>
            <person name="Mazur M."/>
            <person name="Pusch G.D."/>
            <person name="Fonstein M."/>
            <person name="Overbeek R."/>
            <person name="Kyprides N."/>
            <person name="Purnelle B."/>
            <person name="Prozzi D."/>
            <person name="Ngui K."/>
            <person name="Masuy D."/>
            <person name="Hancy F."/>
            <person name="Burteau S."/>
            <person name="Boutry M."/>
            <person name="Delcour J."/>
            <person name="Goffeau A."/>
            <person name="Hols P."/>
        </authorList>
    </citation>
    <scope>NUCLEOTIDE SEQUENCE [LARGE SCALE GENOMIC DNA]</scope>
    <source>
        <strain>ATCC BAA-250 / LMG 18311</strain>
    </source>
</reference>
<organism>
    <name type="scientific">Streptococcus thermophilus (strain ATCC BAA-250 / LMG 18311)</name>
    <dbReference type="NCBI Taxonomy" id="264199"/>
    <lineage>
        <taxon>Bacteria</taxon>
        <taxon>Bacillati</taxon>
        <taxon>Bacillota</taxon>
        <taxon>Bacilli</taxon>
        <taxon>Lactobacillales</taxon>
        <taxon>Streptococcaceae</taxon>
        <taxon>Streptococcus</taxon>
    </lineage>
</organism>
<gene>
    <name evidence="1" type="primary">trpA</name>
    <name type="ordered locus">stu1587</name>
</gene>
<name>TRPA_STRT2</name>
<protein>
    <recommendedName>
        <fullName evidence="1">Tryptophan synthase alpha chain</fullName>
        <ecNumber evidence="1">4.2.1.20</ecNumber>
    </recommendedName>
</protein>
<accession>Q5M351</accession>
<dbReference type="EC" id="4.2.1.20" evidence="1"/>
<dbReference type="EMBL" id="CP000023">
    <property type="protein sequence ID" value="AAV61190.1"/>
    <property type="molecule type" value="Genomic_DNA"/>
</dbReference>
<dbReference type="RefSeq" id="WP_002951616.1">
    <property type="nucleotide sequence ID" value="NC_006448.1"/>
</dbReference>
<dbReference type="SMR" id="Q5M351"/>
<dbReference type="STRING" id="264199.stu1587"/>
<dbReference type="GeneID" id="66899333"/>
<dbReference type="KEGG" id="stl:stu1587"/>
<dbReference type="PATRIC" id="fig|264199.4.peg.1559"/>
<dbReference type="eggNOG" id="COG0159">
    <property type="taxonomic scope" value="Bacteria"/>
</dbReference>
<dbReference type="HOGENOM" id="CLU_016734_0_0_9"/>
<dbReference type="UniPathway" id="UPA00035">
    <property type="reaction ID" value="UER00044"/>
</dbReference>
<dbReference type="Proteomes" id="UP000001170">
    <property type="component" value="Chromosome"/>
</dbReference>
<dbReference type="GO" id="GO:0005829">
    <property type="term" value="C:cytosol"/>
    <property type="evidence" value="ECO:0007669"/>
    <property type="project" value="TreeGrafter"/>
</dbReference>
<dbReference type="GO" id="GO:0004834">
    <property type="term" value="F:tryptophan synthase activity"/>
    <property type="evidence" value="ECO:0007669"/>
    <property type="project" value="UniProtKB-UniRule"/>
</dbReference>
<dbReference type="CDD" id="cd04724">
    <property type="entry name" value="Tryptophan_synthase_alpha"/>
    <property type="match status" value="1"/>
</dbReference>
<dbReference type="Gene3D" id="3.20.20.70">
    <property type="entry name" value="Aldolase class I"/>
    <property type="match status" value="1"/>
</dbReference>
<dbReference type="HAMAP" id="MF_00131">
    <property type="entry name" value="Trp_synth_alpha"/>
    <property type="match status" value="1"/>
</dbReference>
<dbReference type="InterPro" id="IPR013785">
    <property type="entry name" value="Aldolase_TIM"/>
</dbReference>
<dbReference type="InterPro" id="IPR011060">
    <property type="entry name" value="RibuloseP-bd_barrel"/>
</dbReference>
<dbReference type="InterPro" id="IPR018204">
    <property type="entry name" value="Trp_synthase_alpha_AS"/>
</dbReference>
<dbReference type="InterPro" id="IPR002028">
    <property type="entry name" value="Trp_synthase_suA"/>
</dbReference>
<dbReference type="NCBIfam" id="TIGR00262">
    <property type="entry name" value="trpA"/>
    <property type="match status" value="1"/>
</dbReference>
<dbReference type="PANTHER" id="PTHR43406:SF1">
    <property type="entry name" value="TRYPTOPHAN SYNTHASE ALPHA CHAIN, CHLOROPLASTIC"/>
    <property type="match status" value="1"/>
</dbReference>
<dbReference type="PANTHER" id="PTHR43406">
    <property type="entry name" value="TRYPTOPHAN SYNTHASE, ALPHA CHAIN"/>
    <property type="match status" value="1"/>
</dbReference>
<dbReference type="Pfam" id="PF00290">
    <property type="entry name" value="Trp_syntA"/>
    <property type="match status" value="1"/>
</dbReference>
<dbReference type="SUPFAM" id="SSF51366">
    <property type="entry name" value="Ribulose-phoshate binding barrel"/>
    <property type="match status" value="1"/>
</dbReference>
<dbReference type="PROSITE" id="PS00167">
    <property type="entry name" value="TRP_SYNTHASE_ALPHA"/>
    <property type="match status" value="1"/>
</dbReference>
<comment type="function">
    <text evidence="1">The alpha subunit is responsible for the aldol cleavage of indoleglycerol phosphate to indole and glyceraldehyde 3-phosphate.</text>
</comment>
<comment type="catalytic activity">
    <reaction evidence="1">
        <text>(1S,2R)-1-C-(indol-3-yl)glycerol 3-phosphate + L-serine = D-glyceraldehyde 3-phosphate + L-tryptophan + H2O</text>
        <dbReference type="Rhea" id="RHEA:10532"/>
        <dbReference type="ChEBI" id="CHEBI:15377"/>
        <dbReference type="ChEBI" id="CHEBI:33384"/>
        <dbReference type="ChEBI" id="CHEBI:57912"/>
        <dbReference type="ChEBI" id="CHEBI:58866"/>
        <dbReference type="ChEBI" id="CHEBI:59776"/>
        <dbReference type="EC" id="4.2.1.20"/>
    </reaction>
</comment>
<comment type="pathway">
    <text evidence="1">Amino-acid biosynthesis; L-tryptophan biosynthesis; L-tryptophan from chorismate: step 5/5.</text>
</comment>
<comment type="subunit">
    <text evidence="1">Tetramer of two alpha and two beta chains.</text>
</comment>
<comment type="similarity">
    <text evidence="1">Belongs to the TrpA family.</text>
</comment>
<evidence type="ECO:0000255" key="1">
    <source>
        <dbReference type="HAMAP-Rule" id="MF_00131"/>
    </source>
</evidence>
<feature type="chain" id="PRO_0000098857" description="Tryptophan synthase alpha chain">
    <location>
        <begin position="1"/>
        <end position="260"/>
    </location>
</feature>
<feature type="active site" description="Proton acceptor" evidence="1">
    <location>
        <position position="52"/>
    </location>
</feature>
<feature type="active site" description="Proton acceptor" evidence="1">
    <location>
        <position position="63"/>
    </location>
</feature>